<dbReference type="EC" id="3.5.2.7" evidence="1"/>
<dbReference type="EMBL" id="CP001186">
    <property type="protein sequence ID" value="ACK97167.1"/>
    <property type="molecule type" value="Genomic_DNA"/>
</dbReference>
<dbReference type="RefSeq" id="WP_000887549.1">
    <property type="nucleotide sequence ID" value="NC_011772.1"/>
</dbReference>
<dbReference type="SMR" id="B7ISJ0"/>
<dbReference type="KEGG" id="bcg:BCG9842_B1558"/>
<dbReference type="HOGENOM" id="CLU_041647_0_1_9"/>
<dbReference type="UniPathway" id="UPA00379">
    <property type="reaction ID" value="UER00551"/>
</dbReference>
<dbReference type="Proteomes" id="UP000006744">
    <property type="component" value="Chromosome"/>
</dbReference>
<dbReference type="GO" id="GO:0005737">
    <property type="term" value="C:cytoplasm"/>
    <property type="evidence" value="ECO:0007669"/>
    <property type="project" value="UniProtKB-SubCell"/>
</dbReference>
<dbReference type="GO" id="GO:0050480">
    <property type="term" value="F:imidazolonepropionase activity"/>
    <property type="evidence" value="ECO:0007669"/>
    <property type="project" value="UniProtKB-UniRule"/>
</dbReference>
<dbReference type="GO" id="GO:0005506">
    <property type="term" value="F:iron ion binding"/>
    <property type="evidence" value="ECO:0007669"/>
    <property type="project" value="UniProtKB-UniRule"/>
</dbReference>
<dbReference type="GO" id="GO:0008270">
    <property type="term" value="F:zinc ion binding"/>
    <property type="evidence" value="ECO:0007669"/>
    <property type="project" value="UniProtKB-UniRule"/>
</dbReference>
<dbReference type="GO" id="GO:0019556">
    <property type="term" value="P:L-histidine catabolic process to glutamate and formamide"/>
    <property type="evidence" value="ECO:0007669"/>
    <property type="project" value="UniProtKB-UniPathway"/>
</dbReference>
<dbReference type="GO" id="GO:0019557">
    <property type="term" value="P:L-histidine catabolic process to glutamate and formate"/>
    <property type="evidence" value="ECO:0007669"/>
    <property type="project" value="UniProtKB-UniPathway"/>
</dbReference>
<dbReference type="CDD" id="cd01296">
    <property type="entry name" value="Imidazolone-5PH"/>
    <property type="match status" value="1"/>
</dbReference>
<dbReference type="FunFam" id="3.20.20.140:FF:000007">
    <property type="entry name" value="Imidazolonepropionase"/>
    <property type="match status" value="1"/>
</dbReference>
<dbReference type="Gene3D" id="3.20.20.140">
    <property type="entry name" value="Metal-dependent hydrolases"/>
    <property type="match status" value="1"/>
</dbReference>
<dbReference type="Gene3D" id="2.30.40.10">
    <property type="entry name" value="Urease, subunit C, domain 1"/>
    <property type="match status" value="1"/>
</dbReference>
<dbReference type="HAMAP" id="MF_00372">
    <property type="entry name" value="HutI"/>
    <property type="match status" value="1"/>
</dbReference>
<dbReference type="InterPro" id="IPR006680">
    <property type="entry name" value="Amidohydro-rel"/>
</dbReference>
<dbReference type="InterPro" id="IPR005920">
    <property type="entry name" value="HutI"/>
</dbReference>
<dbReference type="InterPro" id="IPR011059">
    <property type="entry name" value="Metal-dep_hydrolase_composite"/>
</dbReference>
<dbReference type="InterPro" id="IPR032466">
    <property type="entry name" value="Metal_Hydrolase"/>
</dbReference>
<dbReference type="NCBIfam" id="TIGR01224">
    <property type="entry name" value="hutI"/>
    <property type="match status" value="1"/>
</dbReference>
<dbReference type="PANTHER" id="PTHR42752">
    <property type="entry name" value="IMIDAZOLONEPROPIONASE"/>
    <property type="match status" value="1"/>
</dbReference>
<dbReference type="PANTHER" id="PTHR42752:SF1">
    <property type="entry name" value="IMIDAZOLONEPROPIONASE-RELATED"/>
    <property type="match status" value="1"/>
</dbReference>
<dbReference type="Pfam" id="PF01979">
    <property type="entry name" value="Amidohydro_1"/>
    <property type="match status" value="1"/>
</dbReference>
<dbReference type="SUPFAM" id="SSF51338">
    <property type="entry name" value="Composite domain of metallo-dependent hydrolases"/>
    <property type="match status" value="1"/>
</dbReference>
<dbReference type="SUPFAM" id="SSF51556">
    <property type="entry name" value="Metallo-dependent hydrolases"/>
    <property type="match status" value="1"/>
</dbReference>
<evidence type="ECO:0000255" key="1">
    <source>
        <dbReference type="HAMAP-Rule" id="MF_00372"/>
    </source>
</evidence>
<name>HUTI_BACC2</name>
<reference key="1">
    <citation type="submission" date="2008-10" db="EMBL/GenBank/DDBJ databases">
        <title>Genome sequence of Bacillus cereus G9842.</title>
        <authorList>
            <person name="Dodson R.J."/>
            <person name="Durkin A.S."/>
            <person name="Rosovitz M.J."/>
            <person name="Rasko D.A."/>
            <person name="Hoffmaster A."/>
            <person name="Ravel J."/>
            <person name="Sutton G."/>
        </authorList>
    </citation>
    <scope>NUCLEOTIDE SEQUENCE [LARGE SCALE GENOMIC DNA]</scope>
    <source>
        <strain>G9842</strain>
    </source>
</reference>
<organism>
    <name type="scientific">Bacillus cereus (strain G9842)</name>
    <dbReference type="NCBI Taxonomy" id="405531"/>
    <lineage>
        <taxon>Bacteria</taxon>
        <taxon>Bacillati</taxon>
        <taxon>Bacillota</taxon>
        <taxon>Bacilli</taxon>
        <taxon>Bacillales</taxon>
        <taxon>Bacillaceae</taxon>
        <taxon>Bacillus</taxon>
        <taxon>Bacillus cereus group</taxon>
    </lineage>
</organism>
<keyword id="KW-0963">Cytoplasm</keyword>
<keyword id="KW-0369">Histidine metabolism</keyword>
<keyword id="KW-0378">Hydrolase</keyword>
<keyword id="KW-0408">Iron</keyword>
<keyword id="KW-0479">Metal-binding</keyword>
<keyword id="KW-0862">Zinc</keyword>
<proteinExistence type="inferred from homology"/>
<accession>B7ISJ0</accession>
<protein>
    <recommendedName>
        <fullName evidence="1">Imidazolonepropionase</fullName>
        <ecNumber evidence="1">3.5.2.7</ecNumber>
    </recommendedName>
    <alternativeName>
        <fullName evidence="1">Imidazolone-5-propionate hydrolase</fullName>
    </alternativeName>
</protein>
<gene>
    <name evidence="1" type="primary">hutI</name>
    <name type="ordered locus">BCG9842_B1558</name>
</gene>
<sequence>MLDTLLINIGQLLTMDQEDGLLRREAMNTLPVIENGVVGIENDVITFVGTAEEAKGLQAKEVIDCGGKMVSPGLVDPHTHLVFGGSRENEIALKLQGVPYLEILEQGGGILSTVNATKQASKEELVQKAKFHLDRMLSFGVTTVEAKSGYGLDDETEWKQLEATAQLQKEHPIDLVSTFLGAHAVPKEYKGRSKEFLQWMLDLLPEMKEKQLAEFVDIFCETGVFSVEESKEFLLKAKELGFDVKIHADEIDPLGGAEAAAEIGAASADHLVGASDKGIEMLANSNTVATLLPGTTFYLNKESFARGRKMIDEGVAVALATDFNPGSCPTENIQLIMSIAMLKLKMTPEEVWNAVTVNSSYAINRGDVAGKIRVGRKADLVLWDAYNYAYVPYHYGVSHVNTVWKNGNIAYTRGEQSWSTATI</sequence>
<feature type="chain" id="PRO_1000121530" description="Imidazolonepropionase">
    <location>
        <begin position="1"/>
        <end position="423"/>
    </location>
</feature>
<feature type="binding site" evidence="1">
    <location>
        <position position="78"/>
    </location>
    <ligand>
        <name>Fe(3+)</name>
        <dbReference type="ChEBI" id="CHEBI:29034"/>
    </ligand>
</feature>
<feature type="binding site" evidence="1">
    <location>
        <position position="78"/>
    </location>
    <ligand>
        <name>Zn(2+)</name>
        <dbReference type="ChEBI" id="CHEBI:29105"/>
    </ligand>
</feature>
<feature type="binding site" evidence="1">
    <location>
        <position position="80"/>
    </location>
    <ligand>
        <name>Fe(3+)</name>
        <dbReference type="ChEBI" id="CHEBI:29034"/>
    </ligand>
</feature>
<feature type="binding site" evidence="1">
    <location>
        <position position="80"/>
    </location>
    <ligand>
        <name>Zn(2+)</name>
        <dbReference type="ChEBI" id="CHEBI:29105"/>
    </ligand>
</feature>
<feature type="binding site" evidence="1">
    <location>
        <position position="87"/>
    </location>
    <ligand>
        <name>4-imidazolone-5-propanoate</name>
        <dbReference type="ChEBI" id="CHEBI:77893"/>
    </ligand>
</feature>
<feature type="binding site" evidence="1">
    <location>
        <position position="150"/>
    </location>
    <ligand>
        <name>4-imidazolone-5-propanoate</name>
        <dbReference type="ChEBI" id="CHEBI:77893"/>
    </ligand>
</feature>
<feature type="binding site" evidence="1">
    <location>
        <position position="150"/>
    </location>
    <ligand>
        <name>N-formimidoyl-L-glutamate</name>
        <dbReference type="ChEBI" id="CHEBI:58928"/>
    </ligand>
</feature>
<feature type="binding site" evidence="1">
    <location>
        <position position="183"/>
    </location>
    <ligand>
        <name>4-imidazolone-5-propanoate</name>
        <dbReference type="ChEBI" id="CHEBI:77893"/>
    </ligand>
</feature>
<feature type="binding site" evidence="1">
    <location>
        <position position="247"/>
    </location>
    <ligand>
        <name>Fe(3+)</name>
        <dbReference type="ChEBI" id="CHEBI:29034"/>
    </ligand>
</feature>
<feature type="binding site" evidence="1">
    <location>
        <position position="247"/>
    </location>
    <ligand>
        <name>Zn(2+)</name>
        <dbReference type="ChEBI" id="CHEBI:29105"/>
    </ligand>
</feature>
<feature type="binding site" evidence="1">
    <location>
        <position position="250"/>
    </location>
    <ligand>
        <name>4-imidazolone-5-propanoate</name>
        <dbReference type="ChEBI" id="CHEBI:77893"/>
    </ligand>
</feature>
<feature type="binding site" evidence="1">
    <location>
        <position position="322"/>
    </location>
    <ligand>
        <name>Fe(3+)</name>
        <dbReference type="ChEBI" id="CHEBI:29034"/>
    </ligand>
</feature>
<feature type="binding site" evidence="1">
    <location>
        <position position="322"/>
    </location>
    <ligand>
        <name>Zn(2+)</name>
        <dbReference type="ChEBI" id="CHEBI:29105"/>
    </ligand>
</feature>
<feature type="binding site" evidence="1">
    <location>
        <position position="324"/>
    </location>
    <ligand>
        <name>N-formimidoyl-L-glutamate</name>
        <dbReference type="ChEBI" id="CHEBI:58928"/>
    </ligand>
</feature>
<feature type="binding site" evidence="1">
    <location>
        <position position="326"/>
    </location>
    <ligand>
        <name>N-formimidoyl-L-glutamate</name>
        <dbReference type="ChEBI" id="CHEBI:58928"/>
    </ligand>
</feature>
<feature type="binding site" evidence="1">
    <location>
        <position position="327"/>
    </location>
    <ligand>
        <name>4-imidazolone-5-propanoate</name>
        <dbReference type="ChEBI" id="CHEBI:77893"/>
    </ligand>
</feature>
<comment type="function">
    <text evidence="1">Catalyzes the hydrolytic cleavage of the carbon-nitrogen bond in imidazolone-5-propanoate to yield N-formimidoyl-L-glutamate. It is the third step in the universal histidine degradation pathway.</text>
</comment>
<comment type="catalytic activity">
    <reaction evidence="1">
        <text>4-imidazolone-5-propanoate + H2O = N-formimidoyl-L-glutamate</text>
        <dbReference type="Rhea" id="RHEA:23660"/>
        <dbReference type="ChEBI" id="CHEBI:15377"/>
        <dbReference type="ChEBI" id="CHEBI:58928"/>
        <dbReference type="ChEBI" id="CHEBI:77893"/>
        <dbReference type="EC" id="3.5.2.7"/>
    </reaction>
</comment>
<comment type="cofactor">
    <cofactor evidence="1">
        <name>Zn(2+)</name>
        <dbReference type="ChEBI" id="CHEBI:29105"/>
    </cofactor>
    <cofactor evidence="1">
        <name>Fe(3+)</name>
        <dbReference type="ChEBI" id="CHEBI:29034"/>
    </cofactor>
    <text evidence="1">Binds 1 zinc or iron ion per subunit.</text>
</comment>
<comment type="pathway">
    <text evidence="1">Amino-acid degradation; L-histidine degradation into L-glutamate; N-formimidoyl-L-glutamate from L-histidine: step 3/3.</text>
</comment>
<comment type="subcellular location">
    <subcellularLocation>
        <location evidence="1">Cytoplasm</location>
    </subcellularLocation>
</comment>
<comment type="similarity">
    <text evidence="1">Belongs to the metallo-dependent hydrolases superfamily. HutI family.</text>
</comment>